<proteinExistence type="inferred from homology"/>
<protein>
    <recommendedName>
        <fullName evidence="1">Peptide methionine sulfoxide reductase MsrA</fullName>
        <shortName evidence="1">Protein-methionine-S-oxide reductase</shortName>
        <ecNumber evidence="1">1.8.4.11</ecNumber>
    </recommendedName>
    <alternativeName>
        <fullName evidence="1">Peptide-methionine (S)-S-oxide reductase</fullName>
        <shortName evidence="1">Peptide Met(O) reductase</shortName>
    </alternativeName>
</protein>
<name>MSRA_STRS7</name>
<sequence>MERAIFAGGCFWCMVQPFEEQAGILSVRSGYTGGHVPNPSYEQVCSKTTGHTEAVEIIFDPSLISYSDLVELYWAQTDPTDAFGQFEDRGDNYRPVIYYTDERQREIAERSKQTLQASGRFDQPIVTSIKPAEPFYLAEDYHQGFYQKNPERYAQSSAIRHQFLEEHWQ</sequence>
<organism>
    <name type="scientific">Streptococcus equi subsp. zooepidemicus (strain H70)</name>
    <dbReference type="NCBI Taxonomy" id="553483"/>
    <lineage>
        <taxon>Bacteria</taxon>
        <taxon>Bacillati</taxon>
        <taxon>Bacillota</taxon>
        <taxon>Bacilli</taxon>
        <taxon>Lactobacillales</taxon>
        <taxon>Streptococcaceae</taxon>
        <taxon>Streptococcus</taxon>
    </lineage>
</organism>
<feature type="chain" id="PRO_1000215190" description="Peptide methionine sulfoxide reductase MsrA">
    <location>
        <begin position="1"/>
        <end position="169"/>
    </location>
</feature>
<feature type="active site" evidence="1">
    <location>
        <position position="10"/>
    </location>
</feature>
<comment type="function">
    <text evidence="1">Has an important function as a repair enzyme for proteins that have been inactivated by oxidation. Catalyzes the reversible oxidation-reduction of methionine sulfoxide in proteins to methionine.</text>
</comment>
<comment type="catalytic activity">
    <reaction evidence="1">
        <text>L-methionyl-[protein] + [thioredoxin]-disulfide + H2O = L-methionyl-(S)-S-oxide-[protein] + [thioredoxin]-dithiol</text>
        <dbReference type="Rhea" id="RHEA:14217"/>
        <dbReference type="Rhea" id="RHEA-COMP:10698"/>
        <dbReference type="Rhea" id="RHEA-COMP:10700"/>
        <dbReference type="Rhea" id="RHEA-COMP:12313"/>
        <dbReference type="Rhea" id="RHEA-COMP:12315"/>
        <dbReference type="ChEBI" id="CHEBI:15377"/>
        <dbReference type="ChEBI" id="CHEBI:16044"/>
        <dbReference type="ChEBI" id="CHEBI:29950"/>
        <dbReference type="ChEBI" id="CHEBI:44120"/>
        <dbReference type="ChEBI" id="CHEBI:50058"/>
        <dbReference type="EC" id="1.8.4.11"/>
    </reaction>
</comment>
<comment type="catalytic activity">
    <reaction evidence="1">
        <text>[thioredoxin]-disulfide + L-methionine + H2O = L-methionine (S)-S-oxide + [thioredoxin]-dithiol</text>
        <dbReference type="Rhea" id="RHEA:19993"/>
        <dbReference type="Rhea" id="RHEA-COMP:10698"/>
        <dbReference type="Rhea" id="RHEA-COMP:10700"/>
        <dbReference type="ChEBI" id="CHEBI:15377"/>
        <dbReference type="ChEBI" id="CHEBI:29950"/>
        <dbReference type="ChEBI" id="CHEBI:50058"/>
        <dbReference type="ChEBI" id="CHEBI:57844"/>
        <dbReference type="ChEBI" id="CHEBI:58772"/>
        <dbReference type="EC" id="1.8.4.11"/>
    </reaction>
</comment>
<comment type="similarity">
    <text evidence="1">Belongs to the MsrA Met sulfoxide reductase family.</text>
</comment>
<keyword id="KW-0560">Oxidoreductase</keyword>
<reference key="1">
    <citation type="journal article" date="2009" name="PLoS Pathog.">
        <title>Genomic evidence for the evolution of Streptococcus equi: host restriction, increased virulence, and genetic exchange with human pathogens.</title>
        <authorList>
            <person name="Holden M.T.G."/>
            <person name="Heather Z."/>
            <person name="Paillot R."/>
            <person name="Steward K.F."/>
            <person name="Webb K."/>
            <person name="Ainslie F."/>
            <person name="Jourdan T."/>
            <person name="Bason N.C."/>
            <person name="Holroyd N.E."/>
            <person name="Mungall K."/>
            <person name="Quail M.A."/>
            <person name="Sanders M."/>
            <person name="Simmonds M."/>
            <person name="Willey D."/>
            <person name="Brooks K."/>
            <person name="Aanensen D.M."/>
            <person name="Spratt B.G."/>
            <person name="Jolley K.A."/>
            <person name="Maiden M.C.J."/>
            <person name="Kehoe M."/>
            <person name="Chanter N."/>
            <person name="Bentley S.D."/>
            <person name="Robinson C."/>
            <person name="Maskell D.J."/>
            <person name="Parkhill J."/>
            <person name="Waller A.S."/>
        </authorList>
    </citation>
    <scope>NUCLEOTIDE SEQUENCE [LARGE SCALE GENOMIC DNA]</scope>
    <source>
        <strain>H70</strain>
    </source>
</reference>
<accession>C0MCD1</accession>
<gene>
    <name evidence="1" type="primary">msrA</name>
    <name type="ordered locus">SZO_05000</name>
</gene>
<evidence type="ECO:0000255" key="1">
    <source>
        <dbReference type="HAMAP-Rule" id="MF_01401"/>
    </source>
</evidence>
<dbReference type="EC" id="1.8.4.11" evidence="1"/>
<dbReference type="EMBL" id="FM204884">
    <property type="protein sequence ID" value="CAW98455.1"/>
    <property type="molecule type" value="Genomic_DNA"/>
</dbReference>
<dbReference type="RefSeq" id="WP_012677568.1">
    <property type="nucleotide sequence ID" value="NZ_CP065054.1"/>
</dbReference>
<dbReference type="SMR" id="C0MCD1"/>
<dbReference type="GeneID" id="83705318"/>
<dbReference type="KEGG" id="seq:SZO_05000"/>
<dbReference type="PATRIC" id="fig|40041.11.peg.534"/>
<dbReference type="eggNOG" id="COG0225">
    <property type="taxonomic scope" value="Bacteria"/>
</dbReference>
<dbReference type="HOGENOM" id="CLU_031040_10_1_9"/>
<dbReference type="Proteomes" id="UP000001368">
    <property type="component" value="Chromosome"/>
</dbReference>
<dbReference type="GO" id="GO:0033744">
    <property type="term" value="F:L-methionine:thioredoxin-disulfide S-oxidoreductase activity"/>
    <property type="evidence" value="ECO:0007669"/>
    <property type="project" value="RHEA"/>
</dbReference>
<dbReference type="GO" id="GO:0008113">
    <property type="term" value="F:peptide-methionine (S)-S-oxide reductase activity"/>
    <property type="evidence" value="ECO:0007669"/>
    <property type="project" value="UniProtKB-UniRule"/>
</dbReference>
<dbReference type="GO" id="GO:0036211">
    <property type="term" value="P:protein modification process"/>
    <property type="evidence" value="ECO:0007669"/>
    <property type="project" value="UniProtKB-UniRule"/>
</dbReference>
<dbReference type="Gene3D" id="3.30.1060.10">
    <property type="entry name" value="Peptide methionine sulphoxide reductase MsrA"/>
    <property type="match status" value="1"/>
</dbReference>
<dbReference type="HAMAP" id="MF_01401">
    <property type="entry name" value="MsrA"/>
    <property type="match status" value="1"/>
</dbReference>
<dbReference type="InterPro" id="IPR002569">
    <property type="entry name" value="Met_Sox_Rdtase_MsrA_dom"/>
</dbReference>
<dbReference type="InterPro" id="IPR036509">
    <property type="entry name" value="Met_Sox_Rdtase_MsrA_sf"/>
</dbReference>
<dbReference type="NCBIfam" id="TIGR00401">
    <property type="entry name" value="msrA"/>
    <property type="match status" value="1"/>
</dbReference>
<dbReference type="PANTHER" id="PTHR43774">
    <property type="entry name" value="PEPTIDE METHIONINE SULFOXIDE REDUCTASE"/>
    <property type="match status" value="1"/>
</dbReference>
<dbReference type="PANTHER" id="PTHR43774:SF1">
    <property type="entry name" value="PEPTIDE METHIONINE SULFOXIDE REDUCTASE MSRA 2"/>
    <property type="match status" value="1"/>
</dbReference>
<dbReference type="Pfam" id="PF01625">
    <property type="entry name" value="PMSR"/>
    <property type="match status" value="1"/>
</dbReference>
<dbReference type="SUPFAM" id="SSF55068">
    <property type="entry name" value="Peptide methionine sulfoxide reductase"/>
    <property type="match status" value="1"/>
</dbReference>